<comment type="function">
    <text evidence="1">Small subunit of the glutamine-dependent carbamoyl phosphate synthetase (CPSase). CPSase catalyzes the formation of carbamoyl phosphate from the ammonia moiety of glutamine, carbonate, and phosphate donated by ATP, constituting the first step of 2 biosynthetic pathways, one leading to arginine and/or urea and the other to pyrimidine nucleotides. The small subunit (glutamine amidotransferase) binds and cleaves glutamine to supply the large subunit with the substrate ammonia.</text>
</comment>
<comment type="catalytic activity">
    <reaction evidence="1">
        <text>hydrogencarbonate + L-glutamine + 2 ATP + H2O = carbamoyl phosphate + L-glutamate + 2 ADP + phosphate + 2 H(+)</text>
        <dbReference type="Rhea" id="RHEA:18633"/>
        <dbReference type="ChEBI" id="CHEBI:15377"/>
        <dbReference type="ChEBI" id="CHEBI:15378"/>
        <dbReference type="ChEBI" id="CHEBI:17544"/>
        <dbReference type="ChEBI" id="CHEBI:29985"/>
        <dbReference type="ChEBI" id="CHEBI:30616"/>
        <dbReference type="ChEBI" id="CHEBI:43474"/>
        <dbReference type="ChEBI" id="CHEBI:58228"/>
        <dbReference type="ChEBI" id="CHEBI:58359"/>
        <dbReference type="ChEBI" id="CHEBI:456216"/>
        <dbReference type="EC" id="6.3.5.5"/>
    </reaction>
</comment>
<comment type="catalytic activity">
    <molecule>Carbamoyl phosphate synthase small chain</molecule>
    <reaction evidence="1">
        <text>L-glutamine + H2O = L-glutamate + NH4(+)</text>
        <dbReference type="Rhea" id="RHEA:15889"/>
        <dbReference type="ChEBI" id="CHEBI:15377"/>
        <dbReference type="ChEBI" id="CHEBI:28938"/>
        <dbReference type="ChEBI" id="CHEBI:29985"/>
        <dbReference type="ChEBI" id="CHEBI:58359"/>
    </reaction>
</comment>
<comment type="pathway">
    <text evidence="1">Amino-acid biosynthesis; L-arginine biosynthesis; carbamoyl phosphate from bicarbonate: step 1/1.</text>
</comment>
<comment type="pathway">
    <text evidence="1">Pyrimidine metabolism; UMP biosynthesis via de novo pathway; (S)-dihydroorotate from bicarbonate: step 1/3.</text>
</comment>
<comment type="subunit">
    <text evidence="1">Composed of two chains; the small (or glutamine) chain promotes the hydrolysis of glutamine to ammonia, which is used by the large (or ammonia) chain to synthesize carbamoyl phosphate. Tetramer of heterodimers (alpha,beta)4.</text>
</comment>
<comment type="similarity">
    <text evidence="1">Belongs to the CarA family.</text>
</comment>
<keyword id="KW-0028">Amino-acid biosynthesis</keyword>
<keyword id="KW-0055">Arginine biosynthesis</keyword>
<keyword id="KW-0067">ATP-binding</keyword>
<keyword id="KW-0315">Glutamine amidotransferase</keyword>
<keyword id="KW-0436">Ligase</keyword>
<keyword id="KW-0547">Nucleotide-binding</keyword>
<keyword id="KW-0665">Pyrimidine biosynthesis</keyword>
<keyword id="KW-1185">Reference proteome</keyword>
<name>CARA_PYRFU</name>
<organism>
    <name type="scientific">Pyrococcus furiosus (strain ATCC 43587 / DSM 3638 / JCM 8422 / Vc1)</name>
    <dbReference type="NCBI Taxonomy" id="186497"/>
    <lineage>
        <taxon>Archaea</taxon>
        <taxon>Methanobacteriati</taxon>
        <taxon>Methanobacteriota</taxon>
        <taxon>Thermococci</taxon>
        <taxon>Thermococcales</taxon>
        <taxon>Thermococcaceae</taxon>
        <taxon>Pyrococcus</taxon>
    </lineage>
</organism>
<gene>
    <name evidence="1" type="primary">carA</name>
    <name type="ordered locus">PF1713</name>
</gene>
<dbReference type="EC" id="6.3.5.5" evidence="1"/>
<dbReference type="EMBL" id="AE009950">
    <property type="protein sequence ID" value="AAL81837.1"/>
    <property type="molecule type" value="Genomic_DNA"/>
</dbReference>
<dbReference type="RefSeq" id="WP_011012859.1">
    <property type="nucleotide sequence ID" value="NZ_CP023154.1"/>
</dbReference>
<dbReference type="SMR" id="Q8U086"/>
<dbReference type="STRING" id="186497.PF1713"/>
<dbReference type="MEROPS" id="C26.A33"/>
<dbReference type="PaxDb" id="186497-PF1713"/>
<dbReference type="GeneID" id="41713544"/>
<dbReference type="KEGG" id="pfu:PF1713"/>
<dbReference type="PATRIC" id="fig|186497.12.peg.1781"/>
<dbReference type="eggNOG" id="arCOG00064">
    <property type="taxonomic scope" value="Archaea"/>
</dbReference>
<dbReference type="HOGENOM" id="CLU_035901_1_1_2"/>
<dbReference type="OrthoDB" id="7675at2157"/>
<dbReference type="PhylomeDB" id="Q8U086"/>
<dbReference type="UniPathway" id="UPA00068">
    <property type="reaction ID" value="UER00171"/>
</dbReference>
<dbReference type="UniPathway" id="UPA00070">
    <property type="reaction ID" value="UER00115"/>
</dbReference>
<dbReference type="Proteomes" id="UP000001013">
    <property type="component" value="Chromosome"/>
</dbReference>
<dbReference type="GO" id="GO:0005524">
    <property type="term" value="F:ATP binding"/>
    <property type="evidence" value="ECO:0007669"/>
    <property type="project" value="UniProtKB-UniRule"/>
</dbReference>
<dbReference type="GO" id="GO:0004088">
    <property type="term" value="F:carbamoyl-phosphate synthase (glutamine-hydrolyzing) activity"/>
    <property type="evidence" value="ECO:0007669"/>
    <property type="project" value="UniProtKB-UniRule"/>
</dbReference>
<dbReference type="GO" id="GO:0004359">
    <property type="term" value="F:glutaminase activity"/>
    <property type="evidence" value="ECO:0007669"/>
    <property type="project" value="RHEA"/>
</dbReference>
<dbReference type="GO" id="GO:0006207">
    <property type="term" value="P:'de novo' pyrimidine nucleobase biosynthetic process"/>
    <property type="evidence" value="ECO:0007669"/>
    <property type="project" value="InterPro"/>
</dbReference>
<dbReference type="GO" id="GO:0044205">
    <property type="term" value="P:'de novo' UMP biosynthetic process"/>
    <property type="evidence" value="ECO:0007669"/>
    <property type="project" value="UniProtKB-UniRule"/>
</dbReference>
<dbReference type="GO" id="GO:0006541">
    <property type="term" value="P:glutamine metabolic process"/>
    <property type="evidence" value="ECO:0007669"/>
    <property type="project" value="InterPro"/>
</dbReference>
<dbReference type="GO" id="GO:0006526">
    <property type="term" value="P:L-arginine biosynthetic process"/>
    <property type="evidence" value="ECO:0007669"/>
    <property type="project" value="UniProtKB-UniRule"/>
</dbReference>
<dbReference type="CDD" id="cd01744">
    <property type="entry name" value="GATase1_CPSase"/>
    <property type="match status" value="1"/>
</dbReference>
<dbReference type="Gene3D" id="3.40.50.880">
    <property type="match status" value="1"/>
</dbReference>
<dbReference type="Gene3D" id="3.50.30.20">
    <property type="entry name" value="Carbamoyl-phosphate synthase small subunit, N-terminal domain"/>
    <property type="match status" value="1"/>
</dbReference>
<dbReference type="HAMAP" id="MF_01209">
    <property type="entry name" value="CPSase_S_chain"/>
    <property type="match status" value="1"/>
</dbReference>
<dbReference type="InterPro" id="IPR050472">
    <property type="entry name" value="Anth_synth/Amidotransfase"/>
</dbReference>
<dbReference type="InterPro" id="IPR006274">
    <property type="entry name" value="CarbamoylP_synth_ssu"/>
</dbReference>
<dbReference type="InterPro" id="IPR002474">
    <property type="entry name" value="CarbamoylP_synth_ssu_N"/>
</dbReference>
<dbReference type="InterPro" id="IPR036480">
    <property type="entry name" value="CarbP_synth_ssu_N_sf"/>
</dbReference>
<dbReference type="InterPro" id="IPR029062">
    <property type="entry name" value="Class_I_gatase-like"/>
</dbReference>
<dbReference type="InterPro" id="IPR035686">
    <property type="entry name" value="CPSase_GATase1"/>
</dbReference>
<dbReference type="InterPro" id="IPR017926">
    <property type="entry name" value="GATASE"/>
</dbReference>
<dbReference type="NCBIfam" id="TIGR01368">
    <property type="entry name" value="CPSaseIIsmall"/>
    <property type="match status" value="1"/>
</dbReference>
<dbReference type="NCBIfam" id="NF009475">
    <property type="entry name" value="PRK12838.1"/>
    <property type="match status" value="1"/>
</dbReference>
<dbReference type="PANTHER" id="PTHR43418:SF7">
    <property type="entry name" value="CARBAMOYL-PHOSPHATE SYNTHASE SMALL CHAIN"/>
    <property type="match status" value="1"/>
</dbReference>
<dbReference type="PANTHER" id="PTHR43418">
    <property type="entry name" value="MULTIFUNCTIONAL TRYPTOPHAN BIOSYNTHESIS PROTEIN-RELATED"/>
    <property type="match status" value="1"/>
</dbReference>
<dbReference type="Pfam" id="PF00988">
    <property type="entry name" value="CPSase_sm_chain"/>
    <property type="match status" value="1"/>
</dbReference>
<dbReference type="Pfam" id="PF00117">
    <property type="entry name" value="GATase"/>
    <property type="match status" value="1"/>
</dbReference>
<dbReference type="PRINTS" id="PR00097">
    <property type="entry name" value="ANTSNTHASEII"/>
</dbReference>
<dbReference type="PRINTS" id="PR00099">
    <property type="entry name" value="CPSGATASE"/>
</dbReference>
<dbReference type="PRINTS" id="PR00096">
    <property type="entry name" value="GATASE"/>
</dbReference>
<dbReference type="SMART" id="SM01097">
    <property type="entry name" value="CPSase_sm_chain"/>
    <property type="match status" value="1"/>
</dbReference>
<dbReference type="SUPFAM" id="SSF52021">
    <property type="entry name" value="Carbamoyl phosphate synthetase, small subunit N-terminal domain"/>
    <property type="match status" value="1"/>
</dbReference>
<dbReference type="SUPFAM" id="SSF52317">
    <property type="entry name" value="Class I glutamine amidotransferase-like"/>
    <property type="match status" value="1"/>
</dbReference>
<dbReference type="PROSITE" id="PS51273">
    <property type="entry name" value="GATASE_TYPE_1"/>
    <property type="match status" value="1"/>
</dbReference>
<protein>
    <recommendedName>
        <fullName evidence="1">Carbamoyl phosphate synthase small chain</fullName>
        <ecNumber evidence="1">6.3.5.5</ecNumber>
    </recommendedName>
    <alternativeName>
        <fullName evidence="1">Carbamoyl phosphate synthetase glutamine chain</fullName>
    </alternativeName>
</protein>
<reference key="1">
    <citation type="journal article" date="1999" name="Genetics">
        <title>Divergence of the hyperthermophilic archaea Pyrococcus furiosus and P. horikoshii inferred from complete genomic sequences.</title>
        <authorList>
            <person name="Maeder D.L."/>
            <person name="Weiss R.B."/>
            <person name="Dunn D.M."/>
            <person name="Cherry J.L."/>
            <person name="Gonzalez J.M."/>
            <person name="DiRuggiero J."/>
            <person name="Robb F.T."/>
        </authorList>
    </citation>
    <scope>NUCLEOTIDE SEQUENCE [LARGE SCALE GENOMIC DNA]</scope>
    <source>
        <strain>ATCC 43587 / DSM 3638 / JCM 8422 / Vc1</strain>
    </source>
</reference>
<proteinExistence type="inferred from homology"/>
<sequence>MGVHKKGYLVLEDGSVIEGKAFGAETIRYGEVVFTTAMVGYPESLTDPSYKGQILIATNPLMGTYGVSSKSLKEHGLPLHYESDSIKVEGFVISFLMRPNHWSSEMTLDEWLRREGVPGLYGVDTRALVKKIREEGVMRGAIVTTETDLEEILENIRKISYESTNFVELVSPKNPIVHTPKNVKFRVVVLDLGVKFGILRELLKRGIEVVRIPWNWDILEAYYSYNADGIFISNGPGNPTLLKEVAKRIRKAFNEEIPMMGICLGQQLLALADGAEIYKLKYGHRGINKPVKDLESGKAFVTTQNHGYAIVPESLNEFKVWMVNLDDNSVEGIKHESLPIIATQYHPEASPGPWDSLWVFDEFVKILEGRK</sequence>
<evidence type="ECO:0000255" key="1">
    <source>
        <dbReference type="HAMAP-Rule" id="MF_01209"/>
    </source>
</evidence>
<feature type="chain" id="PRO_0000112363" description="Carbamoyl phosphate synthase small chain">
    <location>
        <begin position="1"/>
        <end position="371"/>
    </location>
</feature>
<feature type="domain" description="Glutamine amidotransferase type-1" evidence="1">
    <location>
        <begin position="186"/>
        <end position="371"/>
    </location>
</feature>
<feature type="region of interest" description="CPSase" evidence="1">
    <location>
        <begin position="1"/>
        <end position="182"/>
    </location>
</feature>
<feature type="active site" description="Nucleophile" evidence="1">
    <location>
        <position position="263"/>
    </location>
</feature>
<feature type="active site" evidence="1">
    <location>
        <position position="346"/>
    </location>
</feature>
<feature type="active site" evidence="1">
    <location>
        <position position="348"/>
    </location>
</feature>
<feature type="binding site" evidence="1">
    <location>
        <position position="49"/>
    </location>
    <ligand>
        <name>L-glutamine</name>
        <dbReference type="ChEBI" id="CHEBI:58359"/>
    </ligand>
</feature>
<feature type="binding site" evidence="1">
    <location>
        <position position="235"/>
    </location>
    <ligand>
        <name>L-glutamine</name>
        <dbReference type="ChEBI" id="CHEBI:58359"/>
    </ligand>
</feature>
<feature type="binding site" evidence="1">
    <location>
        <position position="237"/>
    </location>
    <ligand>
        <name>L-glutamine</name>
        <dbReference type="ChEBI" id="CHEBI:58359"/>
    </ligand>
</feature>
<feature type="binding site" evidence="1">
    <location>
        <position position="264"/>
    </location>
    <ligand>
        <name>L-glutamine</name>
        <dbReference type="ChEBI" id="CHEBI:58359"/>
    </ligand>
</feature>
<feature type="binding site" evidence="1">
    <location>
        <position position="267"/>
    </location>
    <ligand>
        <name>L-glutamine</name>
        <dbReference type="ChEBI" id="CHEBI:58359"/>
    </ligand>
</feature>
<feature type="binding site" evidence="1">
    <location>
        <position position="305"/>
    </location>
    <ligand>
        <name>L-glutamine</name>
        <dbReference type="ChEBI" id="CHEBI:58359"/>
    </ligand>
</feature>
<feature type="binding site" evidence="1">
    <location>
        <position position="307"/>
    </location>
    <ligand>
        <name>L-glutamine</name>
        <dbReference type="ChEBI" id="CHEBI:58359"/>
    </ligand>
</feature>
<feature type="binding site" evidence="1">
    <location>
        <position position="308"/>
    </location>
    <ligand>
        <name>L-glutamine</name>
        <dbReference type="ChEBI" id="CHEBI:58359"/>
    </ligand>
</feature>
<accession>Q8U086</accession>